<feature type="chain" id="PRO_0000258948" description="Nucleotide-binding protein Bcep18194_A6125">
    <location>
        <begin position="1"/>
        <end position="302"/>
    </location>
</feature>
<feature type="binding site" evidence="1">
    <location>
        <begin position="8"/>
        <end position="15"/>
    </location>
    <ligand>
        <name>ATP</name>
        <dbReference type="ChEBI" id="CHEBI:30616"/>
    </ligand>
</feature>
<feature type="binding site" evidence="1">
    <location>
        <begin position="57"/>
        <end position="60"/>
    </location>
    <ligand>
        <name>GTP</name>
        <dbReference type="ChEBI" id="CHEBI:37565"/>
    </ligand>
</feature>
<organism>
    <name type="scientific">Burkholderia lata (strain ATCC 17760 / DSM 23089 / LMG 22485 / NCIMB 9086 / R18194 / 383)</name>
    <dbReference type="NCBI Taxonomy" id="482957"/>
    <lineage>
        <taxon>Bacteria</taxon>
        <taxon>Pseudomonadati</taxon>
        <taxon>Pseudomonadota</taxon>
        <taxon>Betaproteobacteria</taxon>
        <taxon>Burkholderiales</taxon>
        <taxon>Burkholderiaceae</taxon>
        <taxon>Burkholderia</taxon>
        <taxon>Burkholderia cepacia complex</taxon>
    </lineage>
</organism>
<comment type="function">
    <text evidence="1">Displays ATPase and GTPase activities.</text>
</comment>
<comment type="similarity">
    <text evidence="1">Belongs to the RapZ-like family.</text>
</comment>
<comment type="sequence caution" evidence="2">
    <conflict type="erroneous initiation">
        <sequence resource="EMBL-CDS" id="ABB09719"/>
    </conflict>
</comment>
<keyword id="KW-0067">ATP-binding</keyword>
<keyword id="KW-0342">GTP-binding</keyword>
<keyword id="KW-0547">Nucleotide-binding</keyword>
<accession>Q39CU7</accession>
<reference key="1">
    <citation type="submission" date="2005-10" db="EMBL/GenBank/DDBJ databases">
        <title>Complete sequence of chromosome 1 of Burkholderia sp. 383.</title>
        <authorList>
            <consortium name="US DOE Joint Genome Institute"/>
            <person name="Copeland A."/>
            <person name="Lucas S."/>
            <person name="Lapidus A."/>
            <person name="Barry K."/>
            <person name="Detter J.C."/>
            <person name="Glavina T."/>
            <person name="Hammon N."/>
            <person name="Israni S."/>
            <person name="Pitluck S."/>
            <person name="Chain P."/>
            <person name="Malfatti S."/>
            <person name="Shin M."/>
            <person name="Vergez L."/>
            <person name="Schmutz J."/>
            <person name="Larimer F."/>
            <person name="Land M."/>
            <person name="Kyrpides N."/>
            <person name="Lykidis A."/>
            <person name="Richardson P."/>
        </authorList>
    </citation>
    <scope>NUCLEOTIDE SEQUENCE [LARGE SCALE GENOMIC DNA]</scope>
    <source>
        <strain>ATCC 17760 / DSM 23089 / LMG 22485 / NCIMB 9086 / R18194 / 383</strain>
    </source>
</reference>
<name>Y6125_BURL3</name>
<dbReference type="EMBL" id="CP000151">
    <property type="protein sequence ID" value="ABB09719.1"/>
    <property type="status" value="ALT_INIT"/>
    <property type="molecule type" value="Genomic_DNA"/>
</dbReference>
<dbReference type="SMR" id="Q39CU7"/>
<dbReference type="GeneID" id="45096006"/>
<dbReference type="KEGG" id="bur:Bcep18194_A6125"/>
<dbReference type="PATRIC" id="fig|482957.22.peg.3130"/>
<dbReference type="HOGENOM" id="CLU_059558_1_1_4"/>
<dbReference type="Proteomes" id="UP000002705">
    <property type="component" value="Chromosome 1"/>
</dbReference>
<dbReference type="GO" id="GO:0005524">
    <property type="term" value="F:ATP binding"/>
    <property type="evidence" value="ECO:0007669"/>
    <property type="project" value="UniProtKB-UniRule"/>
</dbReference>
<dbReference type="GO" id="GO:0005525">
    <property type="term" value="F:GTP binding"/>
    <property type="evidence" value="ECO:0007669"/>
    <property type="project" value="UniProtKB-UniRule"/>
</dbReference>
<dbReference type="Gene3D" id="3.40.50.300">
    <property type="entry name" value="P-loop containing nucleotide triphosphate hydrolases"/>
    <property type="match status" value="1"/>
</dbReference>
<dbReference type="HAMAP" id="MF_00636">
    <property type="entry name" value="RapZ_like"/>
    <property type="match status" value="1"/>
</dbReference>
<dbReference type="InterPro" id="IPR027417">
    <property type="entry name" value="P-loop_NTPase"/>
</dbReference>
<dbReference type="InterPro" id="IPR005337">
    <property type="entry name" value="RapZ-like"/>
</dbReference>
<dbReference type="InterPro" id="IPR053930">
    <property type="entry name" value="RapZ-like_N"/>
</dbReference>
<dbReference type="InterPro" id="IPR053931">
    <property type="entry name" value="RapZ_C"/>
</dbReference>
<dbReference type="NCBIfam" id="NF003828">
    <property type="entry name" value="PRK05416.1"/>
    <property type="match status" value="1"/>
</dbReference>
<dbReference type="PANTHER" id="PTHR30448">
    <property type="entry name" value="RNASE ADAPTER PROTEIN RAPZ"/>
    <property type="match status" value="1"/>
</dbReference>
<dbReference type="PANTHER" id="PTHR30448:SF0">
    <property type="entry name" value="RNASE ADAPTER PROTEIN RAPZ"/>
    <property type="match status" value="1"/>
</dbReference>
<dbReference type="Pfam" id="PF22740">
    <property type="entry name" value="PapZ_C"/>
    <property type="match status" value="1"/>
</dbReference>
<dbReference type="Pfam" id="PF03668">
    <property type="entry name" value="RapZ-like_N"/>
    <property type="match status" value="1"/>
</dbReference>
<dbReference type="PIRSF" id="PIRSF005052">
    <property type="entry name" value="P-loopkin"/>
    <property type="match status" value="1"/>
</dbReference>
<dbReference type="SUPFAM" id="SSF52540">
    <property type="entry name" value="P-loop containing nucleoside triphosphate hydrolases"/>
    <property type="match status" value="1"/>
</dbReference>
<sequence length="302" mass="33780">MRIVLITGISGSGKSVALNALEDAGYYCVDNLPPHVLPELARYLAGEGQHRLAVAIDARSSASLDEMPGLIRDLSREHDVRVLFLNASTQALIQRFSETRRRHPLSGSLSHDADVGLLSSLEEAIERERHLVAPLAEFGHQIDTSTLRANALRTWVKRFIEQKNNDLMVMFESFGFKRGVPLDADLMFDVRALPNPYYDHELRPLTGLDQPVIAFLDALPIVHQMIDDIHAFLMKWLPHFRDDNRSYLTVAIGCTGGQHRSVFIAETLAARLAHEANVIVRHRDAPVDVDASSRLVSEVDRP</sequence>
<gene>
    <name type="ordered locus">Bcep18194_A6125</name>
</gene>
<protein>
    <recommendedName>
        <fullName evidence="1">Nucleotide-binding protein Bcep18194_A6125</fullName>
    </recommendedName>
</protein>
<proteinExistence type="inferred from homology"/>
<evidence type="ECO:0000255" key="1">
    <source>
        <dbReference type="HAMAP-Rule" id="MF_00636"/>
    </source>
</evidence>
<evidence type="ECO:0000305" key="2"/>